<organism>
    <name type="scientific">Acinetobacter baumannii (strain AB0057)</name>
    <dbReference type="NCBI Taxonomy" id="480119"/>
    <lineage>
        <taxon>Bacteria</taxon>
        <taxon>Pseudomonadati</taxon>
        <taxon>Pseudomonadota</taxon>
        <taxon>Gammaproteobacteria</taxon>
        <taxon>Moraxellales</taxon>
        <taxon>Moraxellaceae</taxon>
        <taxon>Acinetobacter</taxon>
        <taxon>Acinetobacter calcoaceticus/baumannii complex</taxon>
    </lineage>
</organism>
<protein>
    <recommendedName>
        <fullName evidence="1">Large ribosomal subunit protein bL27</fullName>
    </recommendedName>
    <alternativeName>
        <fullName evidence="3">50S ribosomal protein L27</fullName>
    </alternativeName>
</protein>
<reference key="1">
    <citation type="journal article" date="2008" name="J. Bacteriol.">
        <title>Comparative genome sequence analysis of multidrug-resistant Acinetobacter baumannii.</title>
        <authorList>
            <person name="Adams M.D."/>
            <person name="Goglin K."/>
            <person name="Molyneaux N."/>
            <person name="Hujer K.M."/>
            <person name="Lavender H."/>
            <person name="Jamison J.J."/>
            <person name="MacDonald I.J."/>
            <person name="Martin K.M."/>
            <person name="Russo T."/>
            <person name="Campagnari A.A."/>
            <person name="Hujer A.M."/>
            <person name="Bonomo R.A."/>
            <person name="Gill S.R."/>
        </authorList>
    </citation>
    <scope>NUCLEOTIDE SEQUENCE [LARGE SCALE GENOMIC DNA]</scope>
    <source>
        <strain>AB0057</strain>
    </source>
</reference>
<accession>B7I6V8</accession>
<evidence type="ECO:0000255" key="1">
    <source>
        <dbReference type="HAMAP-Rule" id="MF_00539"/>
    </source>
</evidence>
<evidence type="ECO:0000256" key="2">
    <source>
        <dbReference type="SAM" id="MobiDB-lite"/>
    </source>
</evidence>
<evidence type="ECO:0000305" key="3"/>
<evidence type="ECO:0007829" key="4">
    <source>
        <dbReference type="PDB" id="7M4V"/>
    </source>
</evidence>
<keyword id="KW-0002">3D-structure</keyword>
<keyword id="KW-0687">Ribonucleoprotein</keyword>
<keyword id="KW-0689">Ribosomal protein</keyword>
<proteinExistence type="evidence at protein level"/>
<dbReference type="EMBL" id="CP001182">
    <property type="protein sequence ID" value="ACJ41734.1"/>
    <property type="molecule type" value="Genomic_DNA"/>
</dbReference>
<dbReference type="RefSeq" id="WP_000201632.1">
    <property type="nucleotide sequence ID" value="NC_011586.2"/>
</dbReference>
<dbReference type="PDB" id="6V39">
    <property type="method" value="EM"/>
    <property type="resolution" value="3.04 A"/>
    <property type="chains" value="V=1-85"/>
</dbReference>
<dbReference type="PDB" id="6V3A">
    <property type="method" value="EM"/>
    <property type="resolution" value="2.82 A"/>
    <property type="chains" value="V=1-85"/>
</dbReference>
<dbReference type="PDB" id="6V3B">
    <property type="method" value="EM"/>
    <property type="resolution" value="2.91 A"/>
    <property type="chains" value="V=1-85"/>
</dbReference>
<dbReference type="PDB" id="6V3D">
    <property type="method" value="EM"/>
    <property type="resolution" value="2.95 A"/>
    <property type="chains" value="V=1-85"/>
</dbReference>
<dbReference type="PDB" id="7M4V">
    <property type="method" value="EM"/>
    <property type="resolution" value="2.54 A"/>
    <property type="chains" value="V=1-85"/>
</dbReference>
<dbReference type="PDB" id="7M4W">
    <property type="method" value="EM"/>
    <property type="resolution" value="2.55 A"/>
    <property type="chains" value="V=1-85"/>
</dbReference>
<dbReference type="PDB" id="7M4X">
    <property type="method" value="EM"/>
    <property type="resolution" value="2.66 A"/>
    <property type="chains" value="V=1-85"/>
</dbReference>
<dbReference type="PDB" id="7M4Y">
    <property type="method" value="EM"/>
    <property type="resolution" value="2.50 A"/>
    <property type="chains" value="V=1-85"/>
</dbReference>
<dbReference type="PDB" id="7M4Z">
    <property type="method" value="EM"/>
    <property type="resolution" value="2.92 A"/>
    <property type="chains" value="V=1-85"/>
</dbReference>
<dbReference type="PDB" id="7RYF">
    <property type="method" value="EM"/>
    <property type="resolution" value="2.65 A"/>
    <property type="chains" value="V=1-85"/>
</dbReference>
<dbReference type="PDB" id="7RYG">
    <property type="method" value="EM"/>
    <property type="resolution" value="2.38 A"/>
    <property type="chains" value="V=1-85"/>
</dbReference>
<dbReference type="PDB" id="7RYH">
    <property type="method" value="EM"/>
    <property type="resolution" value="2.43 A"/>
    <property type="chains" value="V=1-85"/>
</dbReference>
<dbReference type="PDB" id="7UVV">
    <property type="method" value="EM"/>
    <property type="resolution" value="2.50 A"/>
    <property type="chains" value="V=1-85"/>
</dbReference>
<dbReference type="PDB" id="7UVW">
    <property type="method" value="EM"/>
    <property type="resolution" value="2.37 A"/>
    <property type="chains" value="V=1-85"/>
</dbReference>
<dbReference type="PDB" id="7UVX">
    <property type="method" value="EM"/>
    <property type="resolution" value="2.35 A"/>
    <property type="chains" value="V=1-85"/>
</dbReference>
<dbReference type="PDB" id="7UVY">
    <property type="method" value="EM"/>
    <property type="resolution" value="2.39 A"/>
    <property type="chains" value="V=1-85"/>
</dbReference>
<dbReference type="PDB" id="7UVZ">
    <property type="method" value="EM"/>
    <property type="resolution" value="2.21 A"/>
    <property type="chains" value="V=1-85"/>
</dbReference>
<dbReference type="PDB" id="7UW1">
    <property type="method" value="EM"/>
    <property type="resolution" value="2.21 A"/>
    <property type="chains" value="V=1-85"/>
</dbReference>
<dbReference type="PDBsum" id="6V39"/>
<dbReference type="PDBsum" id="6V3A"/>
<dbReference type="PDBsum" id="6V3B"/>
<dbReference type="PDBsum" id="6V3D"/>
<dbReference type="PDBsum" id="7M4V"/>
<dbReference type="PDBsum" id="7M4W"/>
<dbReference type="PDBsum" id="7M4X"/>
<dbReference type="PDBsum" id="7M4Y"/>
<dbReference type="PDBsum" id="7M4Z"/>
<dbReference type="PDBsum" id="7RYF"/>
<dbReference type="PDBsum" id="7RYG"/>
<dbReference type="PDBsum" id="7RYH"/>
<dbReference type="PDBsum" id="7UVV"/>
<dbReference type="PDBsum" id="7UVW"/>
<dbReference type="PDBsum" id="7UVX"/>
<dbReference type="PDBsum" id="7UVY"/>
<dbReference type="PDBsum" id="7UVZ"/>
<dbReference type="PDBsum" id="7UW1"/>
<dbReference type="EMDB" id="EMD-21030"/>
<dbReference type="EMDB" id="EMD-21031"/>
<dbReference type="EMDB" id="EMD-21032"/>
<dbReference type="EMDB" id="EMD-21033"/>
<dbReference type="EMDB" id="EMD-23667"/>
<dbReference type="EMDB" id="EMD-23668"/>
<dbReference type="EMDB" id="EMD-23669"/>
<dbReference type="EMDB" id="EMD-23670"/>
<dbReference type="EMDB" id="EMD-23671"/>
<dbReference type="EMDB" id="EMD-24738"/>
<dbReference type="EMDB" id="EMD-24739"/>
<dbReference type="EMDB" id="EMD-24740"/>
<dbReference type="EMDB" id="EMD-26817"/>
<dbReference type="EMDB" id="EMD-26818"/>
<dbReference type="EMDB" id="EMD-26819"/>
<dbReference type="EMDB" id="EMD-26820"/>
<dbReference type="EMDB" id="EMD-26821"/>
<dbReference type="EMDB" id="EMD-26822"/>
<dbReference type="SMR" id="B7I6V8"/>
<dbReference type="IntAct" id="B7I6V8">
    <property type="interactions" value="2"/>
</dbReference>
<dbReference type="GeneID" id="92895005"/>
<dbReference type="KEGG" id="abn:AB57_3150"/>
<dbReference type="HOGENOM" id="CLU_095424_4_1_6"/>
<dbReference type="Proteomes" id="UP000007094">
    <property type="component" value="Chromosome"/>
</dbReference>
<dbReference type="GO" id="GO:0022625">
    <property type="term" value="C:cytosolic large ribosomal subunit"/>
    <property type="evidence" value="ECO:0007669"/>
    <property type="project" value="TreeGrafter"/>
</dbReference>
<dbReference type="GO" id="GO:0003735">
    <property type="term" value="F:structural constituent of ribosome"/>
    <property type="evidence" value="ECO:0007669"/>
    <property type="project" value="InterPro"/>
</dbReference>
<dbReference type="GO" id="GO:0006412">
    <property type="term" value="P:translation"/>
    <property type="evidence" value="ECO:0007669"/>
    <property type="project" value="UniProtKB-UniRule"/>
</dbReference>
<dbReference type="FunFam" id="2.40.50.100:FF:000001">
    <property type="entry name" value="50S ribosomal protein L27"/>
    <property type="match status" value="1"/>
</dbReference>
<dbReference type="Gene3D" id="2.40.50.100">
    <property type="match status" value="1"/>
</dbReference>
<dbReference type="HAMAP" id="MF_00539">
    <property type="entry name" value="Ribosomal_bL27"/>
    <property type="match status" value="1"/>
</dbReference>
<dbReference type="InterPro" id="IPR001684">
    <property type="entry name" value="Ribosomal_bL27"/>
</dbReference>
<dbReference type="InterPro" id="IPR018261">
    <property type="entry name" value="Ribosomal_bL27_CS"/>
</dbReference>
<dbReference type="NCBIfam" id="TIGR00062">
    <property type="entry name" value="L27"/>
    <property type="match status" value="1"/>
</dbReference>
<dbReference type="PANTHER" id="PTHR15893:SF0">
    <property type="entry name" value="LARGE RIBOSOMAL SUBUNIT PROTEIN BL27M"/>
    <property type="match status" value="1"/>
</dbReference>
<dbReference type="PANTHER" id="PTHR15893">
    <property type="entry name" value="RIBOSOMAL PROTEIN L27"/>
    <property type="match status" value="1"/>
</dbReference>
<dbReference type="Pfam" id="PF01016">
    <property type="entry name" value="Ribosomal_L27"/>
    <property type="match status" value="1"/>
</dbReference>
<dbReference type="PRINTS" id="PR00063">
    <property type="entry name" value="RIBOSOMALL27"/>
</dbReference>
<dbReference type="SUPFAM" id="SSF110324">
    <property type="entry name" value="Ribosomal L27 protein-like"/>
    <property type="match status" value="1"/>
</dbReference>
<dbReference type="PROSITE" id="PS00831">
    <property type="entry name" value="RIBOSOMAL_L27"/>
    <property type="match status" value="1"/>
</dbReference>
<gene>
    <name evidence="1" type="primary">rpmA</name>
    <name type="ordered locus">AB57_3150</name>
</gene>
<feature type="chain" id="PRO_1000128676" description="Large ribosomal subunit protein bL27">
    <location>
        <begin position="1"/>
        <end position="85"/>
    </location>
</feature>
<feature type="region of interest" description="Disordered" evidence="2">
    <location>
        <begin position="1"/>
        <end position="20"/>
    </location>
</feature>
<feature type="strand" evidence="4">
    <location>
        <begin position="22"/>
        <end position="25"/>
    </location>
</feature>
<feature type="strand" evidence="4">
    <location>
        <begin position="36"/>
        <end position="39"/>
    </location>
</feature>
<feature type="strand" evidence="4">
    <location>
        <begin position="44"/>
        <end position="47"/>
    </location>
</feature>
<feature type="strand" evidence="4">
    <location>
        <begin position="51"/>
        <end position="53"/>
    </location>
</feature>
<feature type="strand" evidence="4">
    <location>
        <begin position="59"/>
        <end position="72"/>
    </location>
</feature>
<feature type="turn" evidence="4">
    <location>
        <begin position="73"/>
        <end position="76"/>
    </location>
</feature>
<feature type="strand" evidence="4">
    <location>
        <begin position="77"/>
        <end position="83"/>
    </location>
</feature>
<sequence length="85" mass="9056">MATKKAGGSTKNGRDSNPKMLGVKVYGGQTVTAGNIIVRQRGTEFHAGANVGMGRDHTLFATADGVVKFEVKGQFGRRYVKVETV</sequence>
<name>RL27_ACIB5</name>
<comment type="similarity">
    <text evidence="1">Belongs to the bacterial ribosomal protein bL27 family.</text>
</comment>